<name>HSCB_ECOSE</name>
<protein>
    <recommendedName>
        <fullName evidence="1">Co-chaperone protein HscB</fullName>
    </recommendedName>
    <alternativeName>
        <fullName evidence="1">Hsc20</fullName>
    </alternativeName>
</protein>
<accession>B6I599</accession>
<dbReference type="EMBL" id="AP009240">
    <property type="protein sequence ID" value="BAG78337.1"/>
    <property type="molecule type" value="Genomic_DNA"/>
</dbReference>
<dbReference type="RefSeq" id="WP_000384411.1">
    <property type="nucleotide sequence ID" value="NC_011415.1"/>
</dbReference>
<dbReference type="SMR" id="B6I599"/>
<dbReference type="GeneID" id="86947417"/>
<dbReference type="KEGG" id="ecy:ECSE_2813"/>
<dbReference type="HOGENOM" id="CLU_068529_2_0_6"/>
<dbReference type="Proteomes" id="UP000008199">
    <property type="component" value="Chromosome"/>
</dbReference>
<dbReference type="GO" id="GO:1990230">
    <property type="term" value="C:iron-sulfur cluster transfer complex"/>
    <property type="evidence" value="ECO:0007669"/>
    <property type="project" value="TreeGrafter"/>
</dbReference>
<dbReference type="GO" id="GO:0001671">
    <property type="term" value="F:ATPase activator activity"/>
    <property type="evidence" value="ECO:0007669"/>
    <property type="project" value="InterPro"/>
</dbReference>
<dbReference type="GO" id="GO:0051087">
    <property type="term" value="F:protein-folding chaperone binding"/>
    <property type="evidence" value="ECO:0007669"/>
    <property type="project" value="InterPro"/>
</dbReference>
<dbReference type="GO" id="GO:0044571">
    <property type="term" value="P:[2Fe-2S] cluster assembly"/>
    <property type="evidence" value="ECO:0007669"/>
    <property type="project" value="InterPro"/>
</dbReference>
<dbReference type="GO" id="GO:0051259">
    <property type="term" value="P:protein complex oligomerization"/>
    <property type="evidence" value="ECO:0007669"/>
    <property type="project" value="InterPro"/>
</dbReference>
<dbReference type="GO" id="GO:0006457">
    <property type="term" value="P:protein folding"/>
    <property type="evidence" value="ECO:0007669"/>
    <property type="project" value="UniProtKB-UniRule"/>
</dbReference>
<dbReference type="CDD" id="cd06257">
    <property type="entry name" value="DnaJ"/>
    <property type="match status" value="1"/>
</dbReference>
<dbReference type="FunFam" id="1.10.287.110:FF:000008">
    <property type="entry name" value="Co-chaperone protein HscB"/>
    <property type="match status" value="1"/>
</dbReference>
<dbReference type="FunFam" id="1.20.1280.20:FF:000001">
    <property type="entry name" value="Co-chaperone protein HscB"/>
    <property type="match status" value="1"/>
</dbReference>
<dbReference type="Gene3D" id="1.10.287.110">
    <property type="entry name" value="DnaJ domain"/>
    <property type="match status" value="1"/>
</dbReference>
<dbReference type="Gene3D" id="1.20.1280.20">
    <property type="entry name" value="HscB, C-terminal domain"/>
    <property type="match status" value="1"/>
</dbReference>
<dbReference type="HAMAP" id="MF_00682">
    <property type="entry name" value="HscB"/>
    <property type="match status" value="1"/>
</dbReference>
<dbReference type="InterPro" id="IPR001623">
    <property type="entry name" value="DnaJ_domain"/>
</dbReference>
<dbReference type="InterPro" id="IPR004640">
    <property type="entry name" value="HscB"/>
</dbReference>
<dbReference type="InterPro" id="IPR036386">
    <property type="entry name" value="HscB_C_sf"/>
</dbReference>
<dbReference type="InterPro" id="IPR009073">
    <property type="entry name" value="HscB_oligo_C"/>
</dbReference>
<dbReference type="InterPro" id="IPR036869">
    <property type="entry name" value="J_dom_sf"/>
</dbReference>
<dbReference type="NCBIfam" id="TIGR00714">
    <property type="entry name" value="hscB"/>
    <property type="match status" value="1"/>
</dbReference>
<dbReference type="NCBIfam" id="NF003449">
    <property type="entry name" value="PRK05014.1"/>
    <property type="match status" value="1"/>
</dbReference>
<dbReference type="PANTHER" id="PTHR14021">
    <property type="entry name" value="IRON-SULFUR CLUSTER CO-CHAPERONE PROTEIN HSCB"/>
    <property type="match status" value="1"/>
</dbReference>
<dbReference type="PANTHER" id="PTHR14021:SF15">
    <property type="entry name" value="IRON-SULFUR CLUSTER CO-CHAPERONE PROTEIN HSCB"/>
    <property type="match status" value="1"/>
</dbReference>
<dbReference type="Pfam" id="PF07743">
    <property type="entry name" value="HSCB_C"/>
    <property type="match status" value="1"/>
</dbReference>
<dbReference type="SMART" id="SM00271">
    <property type="entry name" value="DnaJ"/>
    <property type="match status" value="1"/>
</dbReference>
<dbReference type="SUPFAM" id="SSF46565">
    <property type="entry name" value="Chaperone J-domain"/>
    <property type="match status" value="1"/>
</dbReference>
<dbReference type="SUPFAM" id="SSF47144">
    <property type="entry name" value="HSC20 (HSCB), C-terminal oligomerisation domain"/>
    <property type="match status" value="1"/>
</dbReference>
<dbReference type="PROSITE" id="PS50076">
    <property type="entry name" value="DNAJ_2"/>
    <property type="match status" value="1"/>
</dbReference>
<feature type="chain" id="PRO_1000131738" description="Co-chaperone protein HscB">
    <location>
        <begin position="1"/>
        <end position="171"/>
    </location>
</feature>
<feature type="domain" description="J" evidence="1">
    <location>
        <begin position="2"/>
        <end position="74"/>
    </location>
</feature>
<evidence type="ECO:0000255" key="1">
    <source>
        <dbReference type="HAMAP-Rule" id="MF_00682"/>
    </source>
</evidence>
<sequence length="171" mass="20108">MDYFTLFGLPARYQLDTQALSLRFQDLQRQYHPDKFASGSQAEQLAAVQQSATINQAWQTLRHPLMRAEYLLSLHGFDLASEQHTVRDTAFLMEQLELREELDEIEQAKDEARLESFIKRVKKMFDTRHQLMVEQLDNEAWDAAADTVRKLRFLDKLRSSAEQLEEKLLDF</sequence>
<organism>
    <name type="scientific">Escherichia coli (strain SE11)</name>
    <dbReference type="NCBI Taxonomy" id="409438"/>
    <lineage>
        <taxon>Bacteria</taxon>
        <taxon>Pseudomonadati</taxon>
        <taxon>Pseudomonadota</taxon>
        <taxon>Gammaproteobacteria</taxon>
        <taxon>Enterobacterales</taxon>
        <taxon>Enterobacteriaceae</taxon>
        <taxon>Escherichia</taxon>
    </lineage>
</organism>
<gene>
    <name evidence="1" type="primary">hscB</name>
    <name type="ordered locus">ECSE_2813</name>
</gene>
<reference key="1">
    <citation type="journal article" date="2008" name="DNA Res.">
        <title>Complete genome sequence and comparative analysis of the wild-type commensal Escherichia coli strain SE11 isolated from a healthy adult.</title>
        <authorList>
            <person name="Oshima K."/>
            <person name="Toh H."/>
            <person name="Ogura Y."/>
            <person name="Sasamoto H."/>
            <person name="Morita H."/>
            <person name="Park S.-H."/>
            <person name="Ooka T."/>
            <person name="Iyoda S."/>
            <person name="Taylor T.D."/>
            <person name="Hayashi T."/>
            <person name="Itoh K."/>
            <person name="Hattori M."/>
        </authorList>
    </citation>
    <scope>NUCLEOTIDE SEQUENCE [LARGE SCALE GENOMIC DNA]</scope>
    <source>
        <strain>SE11</strain>
    </source>
</reference>
<comment type="function">
    <text evidence="1">Co-chaperone involved in the maturation of iron-sulfur cluster-containing proteins. Seems to help targeting proteins to be folded toward HscA.</text>
</comment>
<comment type="subunit">
    <text evidence="1">Interacts with HscA and stimulates its ATPase activity. Interacts with IscU.</text>
</comment>
<comment type="similarity">
    <text evidence="1">Belongs to the HscB family.</text>
</comment>
<keyword id="KW-0143">Chaperone</keyword>
<proteinExistence type="inferred from homology"/>